<comment type="function">
    <text evidence="1">Cell wall formation. Adds enolpyruvyl to UDP-N-acetylglucosamine.</text>
</comment>
<comment type="catalytic activity">
    <reaction evidence="1">
        <text>phosphoenolpyruvate + UDP-N-acetyl-alpha-D-glucosamine = UDP-N-acetyl-3-O-(1-carboxyvinyl)-alpha-D-glucosamine + phosphate</text>
        <dbReference type="Rhea" id="RHEA:18681"/>
        <dbReference type="ChEBI" id="CHEBI:43474"/>
        <dbReference type="ChEBI" id="CHEBI:57705"/>
        <dbReference type="ChEBI" id="CHEBI:58702"/>
        <dbReference type="ChEBI" id="CHEBI:68483"/>
        <dbReference type="EC" id="2.5.1.7"/>
    </reaction>
</comment>
<comment type="pathway">
    <text evidence="1">Cell wall biogenesis; peptidoglycan biosynthesis.</text>
</comment>
<comment type="subcellular location">
    <subcellularLocation>
        <location evidence="1">Cytoplasm</location>
    </subcellularLocation>
</comment>
<comment type="similarity">
    <text evidence="1">Belongs to the EPSP synthase family. MurA subfamily.</text>
</comment>
<proteinExistence type="inferred from homology"/>
<evidence type="ECO:0000255" key="1">
    <source>
        <dbReference type="HAMAP-Rule" id="MF_00111"/>
    </source>
</evidence>
<dbReference type="EC" id="2.5.1.7" evidence="1"/>
<dbReference type="EMBL" id="AM494475">
    <property type="protein sequence ID" value="CAM80710.1"/>
    <property type="molecule type" value="Genomic_DNA"/>
</dbReference>
<dbReference type="RefSeq" id="WP_011944970.1">
    <property type="nucleotide sequence ID" value="NC_009488.1"/>
</dbReference>
<dbReference type="SMR" id="A5CER5"/>
<dbReference type="KEGG" id="ots:OTBS_1615"/>
<dbReference type="eggNOG" id="COG0766">
    <property type="taxonomic scope" value="Bacteria"/>
</dbReference>
<dbReference type="HOGENOM" id="CLU_027387_0_0_5"/>
<dbReference type="UniPathway" id="UPA00219"/>
<dbReference type="Proteomes" id="UP000001565">
    <property type="component" value="Chromosome"/>
</dbReference>
<dbReference type="GO" id="GO:0005737">
    <property type="term" value="C:cytoplasm"/>
    <property type="evidence" value="ECO:0007669"/>
    <property type="project" value="UniProtKB-SubCell"/>
</dbReference>
<dbReference type="GO" id="GO:0008760">
    <property type="term" value="F:UDP-N-acetylglucosamine 1-carboxyvinyltransferase activity"/>
    <property type="evidence" value="ECO:0007669"/>
    <property type="project" value="UniProtKB-UniRule"/>
</dbReference>
<dbReference type="GO" id="GO:0051301">
    <property type="term" value="P:cell division"/>
    <property type="evidence" value="ECO:0007669"/>
    <property type="project" value="UniProtKB-KW"/>
</dbReference>
<dbReference type="GO" id="GO:0071555">
    <property type="term" value="P:cell wall organization"/>
    <property type="evidence" value="ECO:0007669"/>
    <property type="project" value="UniProtKB-KW"/>
</dbReference>
<dbReference type="GO" id="GO:0009252">
    <property type="term" value="P:peptidoglycan biosynthetic process"/>
    <property type="evidence" value="ECO:0007669"/>
    <property type="project" value="UniProtKB-UniRule"/>
</dbReference>
<dbReference type="GO" id="GO:0008360">
    <property type="term" value="P:regulation of cell shape"/>
    <property type="evidence" value="ECO:0007669"/>
    <property type="project" value="UniProtKB-KW"/>
</dbReference>
<dbReference type="GO" id="GO:0019277">
    <property type="term" value="P:UDP-N-acetylgalactosamine biosynthetic process"/>
    <property type="evidence" value="ECO:0007669"/>
    <property type="project" value="InterPro"/>
</dbReference>
<dbReference type="CDD" id="cd01555">
    <property type="entry name" value="UdpNAET"/>
    <property type="match status" value="1"/>
</dbReference>
<dbReference type="Gene3D" id="3.65.10.10">
    <property type="entry name" value="Enolpyruvate transferase domain"/>
    <property type="match status" value="2"/>
</dbReference>
<dbReference type="HAMAP" id="MF_00111">
    <property type="entry name" value="MurA"/>
    <property type="match status" value="1"/>
</dbReference>
<dbReference type="InterPro" id="IPR001986">
    <property type="entry name" value="Enolpyruvate_Tfrase_dom"/>
</dbReference>
<dbReference type="InterPro" id="IPR036968">
    <property type="entry name" value="Enolpyruvate_Tfrase_sf"/>
</dbReference>
<dbReference type="InterPro" id="IPR050068">
    <property type="entry name" value="MurA_subfamily"/>
</dbReference>
<dbReference type="InterPro" id="IPR013792">
    <property type="entry name" value="RNA3'P_cycl/enolpyr_Trfase_a/b"/>
</dbReference>
<dbReference type="InterPro" id="IPR005750">
    <property type="entry name" value="UDP_GlcNAc_COvinyl_MurA"/>
</dbReference>
<dbReference type="NCBIfam" id="TIGR01072">
    <property type="entry name" value="murA"/>
    <property type="match status" value="1"/>
</dbReference>
<dbReference type="NCBIfam" id="NF006873">
    <property type="entry name" value="PRK09369.1"/>
    <property type="match status" value="1"/>
</dbReference>
<dbReference type="PANTHER" id="PTHR43783">
    <property type="entry name" value="UDP-N-ACETYLGLUCOSAMINE 1-CARBOXYVINYLTRANSFERASE"/>
    <property type="match status" value="1"/>
</dbReference>
<dbReference type="PANTHER" id="PTHR43783:SF1">
    <property type="entry name" value="UDP-N-ACETYLGLUCOSAMINE 1-CARBOXYVINYLTRANSFERASE"/>
    <property type="match status" value="1"/>
</dbReference>
<dbReference type="Pfam" id="PF00275">
    <property type="entry name" value="EPSP_synthase"/>
    <property type="match status" value="1"/>
</dbReference>
<dbReference type="SUPFAM" id="SSF55205">
    <property type="entry name" value="EPT/RTPC-like"/>
    <property type="match status" value="1"/>
</dbReference>
<gene>
    <name evidence="1" type="primary">murA</name>
    <name type="ordered locus">OTBS_1615</name>
</gene>
<sequence length="421" mass="45184">MSSILVEGGKSLRGEINISGAKNAALPIIVASLLSSKTLVINNVPQLSDVSDMLFILKSCGVHVEIVGSGTIALTANNISGHFSPPCNIVKKMRASIWILAPLLLRLGQVRIASPGGCAIGQRRIDLHLAALKAFGANIQLEDDYISANCSSRMHGISFKFDKVSVGATITAIMCAVLANGSTKLANCAQEPEIADLCYCLRKMGANITGIGTANISIIGVKELNGANYSIIPDRIEAGTYMVAAAITQGKIKLNNVIFKHLKSAITKLRLSGAIIQYQNENSLIIEGANIIKPLNIQTNPYPKFPTDLQAQFMSLMSIADGVSIITENIYENRYMHVFELIKMGANIVIQSREAVVTGVKKLHGADVIATDLRASVSLVLAGLSAVGITKVKRMHHLDRGYESLVEKLQNCNARVQRIPD</sequence>
<name>MURA_ORITB</name>
<organism>
    <name type="scientific">Orientia tsutsugamushi (strain Boryong)</name>
    <name type="common">Rickettsia tsutsugamushi</name>
    <dbReference type="NCBI Taxonomy" id="357244"/>
    <lineage>
        <taxon>Bacteria</taxon>
        <taxon>Pseudomonadati</taxon>
        <taxon>Pseudomonadota</taxon>
        <taxon>Alphaproteobacteria</taxon>
        <taxon>Rickettsiales</taxon>
        <taxon>Rickettsiaceae</taxon>
        <taxon>Rickettsieae</taxon>
        <taxon>Orientia</taxon>
    </lineage>
</organism>
<accession>A5CER5</accession>
<feature type="chain" id="PRO_1000075975" description="UDP-N-acetylglucosamine 1-carboxyvinyltransferase">
    <location>
        <begin position="1"/>
        <end position="421"/>
    </location>
</feature>
<feature type="active site" description="Proton donor" evidence="1">
    <location>
        <position position="118"/>
    </location>
</feature>
<feature type="binding site" evidence="1">
    <location>
        <begin position="22"/>
        <end position="23"/>
    </location>
    <ligand>
        <name>phosphoenolpyruvate</name>
        <dbReference type="ChEBI" id="CHEBI:58702"/>
    </ligand>
</feature>
<feature type="binding site" evidence="1">
    <location>
        <position position="94"/>
    </location>
    <ligand>
        <name>UDP-N-acetyl-alpha-D-glucosamine</name>
        <dbReference type="ChEBI" id="CHEBI:57705"/>
    </ligand>
</feature>
<feature type="binding site" evidence="1">
    <location>
        <begin position="163"/>
        <end position="166"/>
    </location>
    <ligand>
        <name>UDP-N-acetyl-alpha-D-glucosamine</name>
        <dbReference type="ChEBI" id="CHEBI:57705"/>
    </ligand>
</feature>
<feature type="binding site" evidence="1">
    <location>
        <position position="308"/>
    </location>
    <ligand>
        <name>UDP-N-acetyl-alpha-D-glucosamine</name>
        <dbReference type="ChEBI" id="CHEBI:57705"/>
    </ligand>
</feature>
<feature type="binding site" evidence="1">
    <location>
        <position position="330"/>
    </location>
    <ligand>
        <name>UDP-N-acetyl-alpha-D-glucosamine</name>
        <dbReference type="ChEBI" id="CHEBI:57705"/>
    </ligand>
</feature>
<feature type="modified residue" description="2-(S-cysteinyl)pyruvic acid O-phosphothioketal" evidence="1">
    <location>
        <position position="118"/>
    </location>
</feature>
<reference key="1">
    <citation type="journal article" date="2007" name="Proc. Natl. Acad. Sci. U.S.A.">
        <title>The Orientia tsutsugamushi genome reveals massive proliferation of conjugative type IV secretion system and host-cell interaction genes.</title>
        <authorList>
            <person name="Cho N.-H."/>
            <person name="Kim H.-R."/>
            <person name="Lee J.-H."/>
            <person name="Kim S.-Y."/>
            <person name="Kim J."/>
            <person name="Cha S."/>
            <person name="Kim S.-Y."/>
            <person name="Darby A.C."/>
            <person name="Fuxelius H.-H."/>
            <person name="Yin J."/>
            <person name="Kim J.H."/>
            <person name="Kim J."/>
            <person name="Lee S.J."/>
            <person name="Koh Y.-S."/>
            <person name="Jang W.-J."/>
            <person name="Park K.-H."/>
            <person name="Andersson S.G.E."/>
            <person name="Choi M.-S."/>
            <person name="Kim I.-S."/>
        </authorList>
    </citation>
    <scope>NUCLEOTIDE SEQUENCE [LARGE SCALE GENOMIC DNA]</scope>
    <source>
        <strain>Boryong</strain>
    </source>
</reference>
<keyword id="KW-0131">Cell cycle</keyword>
<keyword id="KW-0132">Cell division</keyword>
<keyword id="KW-0133">Cell shape</keyword>
<keyword id="KW-0961">Cell wall biogenesis/degradation</keyword>
<keyword id="KW-0963">Cytoplasm</keyword>
<keyword id="KW-0573">Peptidoglycan synthesis</keyword>
<keyword id="KW-0670">Pyruvate</keyword>
<keyword id="KW-1185">Reference proteome</keyword>
<keyword id="KW-0808">Transferase</keyword>
<protein>
    <recommendedName>
        <fullName evidence="1">UDP-N-acetylglucosamine 1-carboxyvinyltransferase</fullName>
        <ecNumber evidence="1">2.5.1.7</ecNumber>
    </recommendedName>
    <alternativeName>
        <fullName evidence="1">Enoylpyruvate transferase</fullName>
    </alternativeName>
    <alternativeName>
        <fullName evidence="1">UDP-N-acetylglucosamine enolpyruvyl transferase</fullName>
        <shortName evidence="1">EPT</shortName>
    </alternativeName>
</protein>